<keyword id="KW-0119">Carbohydrate metabolism</keyword>
<keyword id="KW-0165">Cleavage on pair of basic residues</keyword>
<keyword id="KW-1015">Disulfide bond</keyword>
<keyword id="KW-0301">Gamma-carboxyglutamic acid</keyword>
<keyword id="KW-0313">Glucose metabolism</keyword>
<keyword id="KW-0372">Hormone</keyword>
<keyword id="KW-0379">Hydroxylation</keyword>
<keyword id="KW-0964">Secreted</keyword>
<keyword id="KW-0732">Signal</keyword>
<keyword id="KW-0800">Toxin</keyword>
<proteinExistence type="evidence at transcript level"/>
<comment type="function">
    <text evidence="2">This venom insulin, from a fish-hunting cone snail, facilitates prey capture by rapidly inducing hypoglycemic shock. Intraperitoneal injection of this peptide into zebrafish lowers blood glucose with the same potency than human insulin. In vivo, when applied to water, this peptide reduces overall locomotor activity of zebrafish larvae, observed as a significant decrease in the percentage of time spent swimming and movement frequency.</text>
</comment>
<comment type="subunit">
    <text evidence="2">Heterodimer of A and B chains; disulfide-linked.</text>
</comment>
<comment type="subcellular location">
    <subcellularLocation>
        <location evidence="2">Secreted</location>
    </subcellularLocation>
</comment>
<comment type="tissue specificity">
    <text evidence="7">Expressed by the venom gland.</text>
</comment>
<comment type="miscellaneous">
    <text evidence="7">Venom insulins constitute about 1/25 of the total venom of C.geographus.</text>
</comment>
<comment type="similarity">
    <text>Belongs to the insulin family.</text>
</comment>
<protein>
    <recommendedName>
        <fullName evidence="5">Con-Ins G2b</fullName>
    </recommendedName>
    <alternativeName>
        <fullName evidence="8">Insulin 2b</fullName>
    </alternativeName>
    <component>
        <recommendedName>
            <fullName evidence="5">Con-Ins G2b B chain</fullName>
        </recommendedName>
    </component>
    <component>
        <recommendedName>
            <fullName evidence="5">Con-Ins G2b A chain</fullName>
        </recommendedName>
    </component>
</protein>
<sequence>MTTSSYFLLVALGLLLYVRQSFSTHEHTCQLDDPAHPQGKCGSDLVNYHEEKCEEEEARRGGTNDGGKKRRRASPLRKRRRFISMLKARAKRRGYQGIACECCQHYCTDQEFINYCPPVTESSSSSSSAV</sequence>
<organism>
    <name type="scientific">Conus geographus</name>
    <name type="common">Geography cone</name>
    <name type="synonym">Nubecula geographus</name>
    <dbReference type="NCBI Taxonomy" id="6491"/>
    <lineage>
        <taxon>Eukaryota</taxon>
        <taxon>Metazoa</taxon>
        <taxon>Spiralia</taxon>
        <taxon>Lophotrochozoa</taxon>
        <taxon>Mollusca</taxon>
        <taxon>Gastropoda</taxon>
        <taxon>Caenogastropoda</taxon>
        <taxon>Neogastropoda</taxon>
        <taxon>Conoidea</taxon>
        <taxon>Conidae</taxon>
        <taxon>Conus</taxon>
        <taxon>Gastridium</taxon>
    </lineage>
</organism>
<accession>A0A0B5ADT3</accession>
<evidence type="ECO:0000250" key="1">
    <source>
        <dbReference type="UniProtKB" id="A0A0B5ABD9"/>
    </source>
</evidence>
<evidence type="ECO:0000250" key="2">
    <source>
        <dbReference type="UniProtKB" id="A0A0B5AC95"/>
    </source>
</evidence>
<evidence type="ECO:0000255" key="3"/>
<evidence type="ECO:0000256" key="4">
    <source>
        <dbReference type="SAM" id="MobiDB-lite"/>
    </source>
</evidence>
<evidence type="ECO:0000303" key="5">
    <source>
    </source>
</evidence>
<evidence type="ECO:0000305" key="6"/>
<evidence type="ECO:0000305" key="7">
    <source>
    </source>
</evidence>
<evidence type="ECO:0000312" key="8">
    <source>
        <dbReference type="EMBL" id="AJD85823.1"/>
    </source>
</evidence>
<reference key="1">
    <citation type="journal article" date="2015" name="Proc. Natl. Acad. Sci. U.S.A.">
        <title>Specialized insulin is used for chemical warfare by fish-hunting cone snails.</title>
        <authorList>
            <person name="Safavi-Hemami H."/>
            <person name="Gajewiak J."/>
            <person name="Karanth S."/>
            <person name="Robinson S.D."/>
            <person name="Ueberheide B."/>
            <person name="Douglass A.D."/>
            <person name="Schlegel A."/>
            <person name="Imperial J.S."/>
            <person name="Watkins M."/>
            <person name="Bandyopadhyay P.K."/>
            <person name="Yandell M."/>
            <person name="Li Q."/>
            <person name="Purcell A.W."/>
            <person name="Norton R.S."/>
            <person name="Ellgaard L."/>
            <person name="Olivera B.M."/>
        </authorList>
    </citation>
    <scope>NUCLEOTIDE SEQUENCE [MRNA]</scope>
    <source>
        <tissue>Venom gland</tissue>
    </source>
</reference>
<dbReference type="EMBL" id="KP268614">
    <property type="protein sequence ID" value="AJD85823.1"/>
    <property type="molecule type" value="mRNA"/>
</dbReference>
<dbReference type="GO" id="GO:0005576">
    <property type="term" value="C:extracellular region"/>
    <property type="evidence" value="ECO:0007669"/>
    <property type="project" value="UniProtKB-SubCell"/>
</dbReference>
<dbReference type="GO" id="GO:0005179">
    <property type="term" value="F:hormone activity"/>
    <property type="evidence" value="ECO:0007669"/>
    <property type="project" value="UniProtKB-KW"/>
</dbReference>
<dbReference type="GO" id="GO:0090729">
    <property type="term" value="F:toxin activity"/>
    <property type="evidence" value="ECO:0007669"/>
    <property type="project" value="UniProtKB-KW"/>
</dbReference>
<dbReference type="GO" id="GO:0006006">
    <property type="term" value="P:glucose metabolic process"/>
    <property type="evidence" value="ECO:0007669"/>
    <property type="project" value="UniProtKB-KW"/>
</dbReference>
<dbReference type="CDD" id="cd00101">
    <property type="entry name" value="IlGF_like"/>
    <property type="match status" value="1"/>
</dbReference>
<dbReference type="Gene3D" id="1.10.100.10">
    <property type="entry name" value="Insulin-like"/>
    <property type="match status" value="1"/>
</dbReference>
<dbReference type="InterPro" id="IPR036438">
    <property type="entry name" value="Insulin-like_sf"/>
</dbReference>
<dbReference type="InterPro" id="IPR016724">
    <property type="entry name" value="Insulin-rel_pep"/>
</dbReference>
<dbReference type="InterPro" id="IPR022353">
    <property type="entry name" value="Insulin_CS"/>
</dbReference>
<dbReference type="PIRSF" id="PIRSF018431">
    <property type="entry name" value="Molluscan_insulin_rel_peptide"/>
    <property type="match status" value="1"/>
</dbReference>
<dbReference type="SUPFAM" id="SSF56994">
    <property type="entry name" value="Insulin-like"/>
    <property type="match status" value="1"/>
</dbReference>
<dbReference type="PROSITE" id="PS00262">
    <property type="entry name" value="INSULIN"/>
    <property type="match status" value="1"/>
</dbReference>
<name>INS2B_CONGE</name>
<feature type="signal peptide" evidence="3">
    <location>
        <begin position="1"/>
        <end position="23"/>
    </location>
</feature>
<feature type="peptide" id="PRO_5002098014" description="Con-Ins G2b B chain">
    <location>
        <begin position="24"/>
        <end position="58"/>
    </location>
</feature>
<feature type="propeptide" id="PRO_0000439318" description="C peptide" evidence="1">
    <location>
        <begin position="59"/>
        <end position="92"/>
    </location>
</feature>
<feature type="peptide" id="PRO_0000439319" description="Con-Ins G2b A chain" evidence="1">
    <location>
        <begin position="94"/>
        <end position="130"/>
    </location>
</feature>
<feature type="region of interest" description="Disordered" evidence="4">
    <location>
        <begin position="54"/>
        <end position="77"/>
    </location>
</feature>
<feature type="compositionally biased region" description="Basic residues" evidence="4">
    <location>
        <begin position="68"/>
        <end position="77"/>
    </location>
</feature>
<feature type="modified residue" description="4-hydroxyproline; partial" evidence="2">
    <location>
        <position position="34"/>
    </location>
</feature>
<feature type="modified residue" description="4-carboxyglutamate; partial" evidence="2">
    <location>
        <position position="111"/>
    </location>
</feature>
<feature type="disulfide bond" evidence="6">
    <location>
        <begin position="29"/>
        <end position="100"/>
    </location>
</feature>
<feature type="disulfide bond" description="Interchain (between B and A chains)" evidence="2">
    <location>
        <begin position="41"/>
        <end position="103"/>
    </location>
</feature>
<feature type="disulfide bond" description="Interchain (between B and A chains)" evidence="2">
    <location>
        <begin position="53"/>
        <end position="116"/>
    </location>
</feature>
<feature type="disulfide bond" evidence="2">
    <location>
        <begin position="102"/>
        <end position="107"/>
    </location>
</feature>